<proteinExistence type="inferred from homology"/>
<feature type="chain" id="PRO_0000214179" description="UPF0283 membrane protein PBPRA2435">
    <location>
        <begin position="1"/>
        <end position="348"/>
    </location>
</feature>
<feature type="transmembrane region" description="Helical" evidence="1">
    <location>
        <begin position="71"/>
        <end position="91"/>
    </location>
</feature>
<feature type="transmembrane region" description="Helical" evidence="1">
    <location>
        <begin position="97"/>
        <end position="117"/>
    </location>
</feature>
<feature type="transmembrane region" description="Helical" evidence="1">
    <location>
        <begin position="211"/>
        <end position="231"/>
    </location>
</feature>
<gene>
    <name type="ordered locus">PBPRA2435</name>
</gene>
<name>Y2435_PHOPR</name>
<keyword id="KW-0997">Cell inner membrane</keyword>
<keyword id="KW-1003">Cell membrane</keyword>
<keyword id="KW-0472">Membrane</keyword>
<keyword id="KW-1185">Reference proteome</keyword>
<keyword id="KW-0812">Transmembrane</keyword>
<keyword id="KW-1133">Transmembrane helix</keyword>
<comment type="subcellular location">
    <subcellularLocation>
        <location evidence="1">Cell inner membrane</location>
        <topology evidence="1">Multi-pass membrane protein</topology>
    </subcellularLocation>
</comment>
<comment type="similarity">
    <text evidence="1">Belongs to the UPF0283 family.</text>
</comment>
<sequence>MSESFQNKAFKTKIVFDEAKPTDSDAELTAQVQFAESNTFLPEVKADDDIEEQLSHTLASKTKKRSSWFKGLLIAGAAMTGWQTVDYVVSAYQTGDWLALGWSVIVAGIATMGITALGRELFKLRRLKQRQTEREQAQVLLDADGIGQGKAFCMKLAKLSDIRDEHAGYDRWVQSLAATHNDREVLELYDQMVLSHQDRLSRQLVAKYSSEAAVMVAMSPLAVADMLLVAWRNFKLIEQVSVVYGVELGYWSRIKLVKLVLANMAFAGATEVIADTGMDMLSMDLAGRVSTRVAQGVGVGLLTGRLGLKAITLMRPLPWQPDQQPKLSEIRRDLLLKLTHKNESSKNN</sequence>
<dbReference type="EMBL" id="CR378671">
    <property type="protein sequence ID" value="CAG20818.1"/>
    <property type="molecule type" value="Genomic_DNA"/>
</dbReference>
<dbReference type="RefSeq" id="WP_011219101.1">
    <property type="nucleotide sequence ID" value="NC_006370.1"/>
</dbReference>
<dbReference type="STRING" id="298386.PBPRA2435"/>
<dbReference type="KEGG" id="ppr:PBPRA2435"/>
<dbReference type="eggNOG" id="COG3768">
    <property type="taxonomic scope" value="Bacteria"/>
</dbReference>
<dbReference type="HOGENOM" id="CLU_057693_2_0_6"/>
<dbReference type="Proteomes" id="UP000000593">
    <property type="component" value="Chromosome 1"/>
</dbReference>
<dbReference type="GO" id="GO:0005886">
    <property type="term" value="C:plasma membrane"/>
    <property type="evidence" value="ECO:0007669"/>
    <property type="project" value="UniProtKB-SubCell"/>
</dbReference>
<dbReference type="HAMAP" id="MF_01085">
    <property type="entry name" value="UPF0283"/>
    <property type="match status" value="1"/>
</dbReference>
<dbReference type="InterPro" id="IPR021147">
    <property type="entry name" value="DUF697"/>
</dbReference>
<dbReference type="InterPro" id="IPR006507">
    <property type="entry name" value="UPF0283"/>
</dbReference>
<dbReference type="NCBIfam" id="TIGR01620">
    <property type="entry name" value="hyp_HI0043"/>
    <property type="match status" value="1"/>
</dbReference>
<dbReference type="PANTHER" id="PTHR39342">
    <property type="entry name" value="UPF0283 MEMBRANE PROTEIN YCJF"/>
    <property type="match status" value="1"/>
</dbReference>
<dbReference type="PANTHER" id="PTHR39342:SF1">
    <property type="entry name" value="UPF0283 MEMBRANE PROTEIN YCJF"/>
    <property type="match status" value="1"/>
</dbReference>
<dbReference type="Pfam" id="PF05128">
    <property type="entry name" value="DUF697"/>
    <property type="match status" value="1"/>
</dbReference>
<organism>
    <name type="scientific">Photobacterium profundum (strain SS9)</name>
    <dbReference type="NCBI Taxonomy" id="298386"/>
    <lineage>
        <taxon>Bacteria</taxon>
        <taxon>Pseudomonadati</taxon>
        <taxon>Pseudomonadota</taxon>
        <taxon>Gammaproteobacteria</taxon>
        <taxon>Vibrionales</taxon>
        <taxon>Vibrionaceae</taxon>
        <taxon>Photobacterium</taxon>
    </lineage>
</organism>
<accession>Q6LPF8</accession>
<evidence type="ECO:0000255" key="1">
    <source>
        <dbReference type="HAMAP-Rule" id="MF_01085"/>
    </source>
</evidence>
<protein>
    <recommendedName>
        <fullName evidence="1">UPF0283 membrane protein PBPRA2435</fullName>
    </recommendedName>
</protein>
<reference key="1">
    <citation type="journal article" date="2005" name="Science">
        <title>Life at depth: Photobacterium profundum genome sequence and expression analysis.</title>
        <authorList>
            <person name="Vezzi A."/>
            <person name="Campanaro S."/>
            <person name="D'Angelo M."/>
            <person name="Simonato F."/>
            <person name="Vitulo N."/>
            <person name="Lauro F.M."/>
            <person name="Cestaro A."/>
            <person name="Malacrida G."/>
            <person name="Simionati B."/>
            <person name="Cannata N."/>
            <person name="Romualdi C."/>
            <person name="Bartlett D.H."/>
            <person name="Valle G."/>
        </authorList>
    </citation>
    <scope>NUCLEOTIDE SEQUENCE [LARGE SCALE GENOMIC DNA]</scope>
    <source>
        <strain>ATCC BAA-1253 / SS9</strain>
    </source>
</reference>